<keyword id="KW-0456">Lyase</keyword>
<keyword id="KW-0501">Molybdenum cofactor biosynthesis</keyword>
<keyword id="KW-1185">Reference proteome</keyword>
<feature type="chain" id="PRO_1000054146" description="Cyclic pyranopterin monophosphate synthase">
    <location>
        <begin position="1"/>
        <end position="161"/>
    </location>
</feature>
<feature type="active site" evidence="1">
    <location>
        <position position="128"/>
    </location>
</feature>
<feature type="binding site" evidence="1">
    <location>
        <begin position="75"/>
        <end position="77"/>
    </location>
    <ligand>
        <name>substrate</name>
    </ligand>
</feature>
<feature type="binding site" evidence="1">
    <location>
        <begin position="113"/>
        <end position="114"/>
    </location>
    <ligand>
        <name>substrate</name>
    </ligand>
</feature>
<reference key="1">
    <citation type="journal article" date="2005" name="Nucleic Acids Res.">
        <title>Genome dynamics and diversity of Shigella species, the etiologic agents of bacillary dysentery.</title>
        <authorList>
            <person name="Yang F."/>
            <person name="Yang J."/>
            <person name="Zhang X."/>
            <person name="Chen L."/>
            <person name="Jiang Y."/>
            <person name="Yan Y."/>
            <person name="Tang X."/>
            <person name="Wang J."/>
            <person name="Xiong Z."/>
            <person name="Dong J."/>
            <person name="Xue Y."/>
            <person name="Zhu Y."/>
            <person name="Xu X."/>
            <person name="Sun L."/>
            <person name="Chen S."/>
            <person name="Nie H."/>
            <person name="Peng J."/>
            <person name="Xu J."/>
            <person name="Wang Y."/>
            <person name="Yuan Z."/>
            <person name="Wen Y."/>
            <person name="Yao Z."/>
            <person name="Shen Y."/>
            <person name="Qiang B."/>
            <person name="Hou Y."/>
            <person name="Yu J."/>
            <person name="Jin Q."/>
        </authorList>
    </citation>
    <scope>NUCLEOTIDE SEQUENCE [LARGE SCALE GENOMIC DNA]</scope>
    <source>
        <strain>Ss046</strain>
    </source>
</reference>
<organism>
    <name type="scientific">Shigella sonnei (strain Ss046)</name>
    <dbReference type="NCBI Taxonomy" id="300269"/>
    <lineage>
        <taxon>Bacteria</taxon>
        <taxon>Pseudomonadati</taxon>
        <taxon>Pseudomonadota</taxon>
        <taxon>Gammaproteobacteria</taxon>
        <taxon>Enterobacterales</taxon>
        <taxon>Enterobacteriaceae</taxon>
        <taxon>Shigella</taxon>
    </lineage>
</organism>
<sequence length="161" mass="17495">MSQLTHINAAGEAHMVDVSAKAETVREARAEAFVTMRSETLAMIIDGRHHKGDVFATARIVGIQAAKRTWDLIPLCHPLMLSKVEVNLQAEPEHNRVRIETLCRLTGKTGVEMEALTAASVAALTIYDMCKAVQKDMVIGPVRLLAKSGGKSGDFKVEADD</sequence>
<protein>
    <recommendedName>
        <fullName evidence="1">Cyclic pyranopterin monophosphate synthase</fullName>
        <ecNumber evidence="1">4.6.1.17</ecNumber>
    </recommendedName>
    <alternativeName>
        <fullName evidence="1">Molybdenum cofactor biosynthesis protein C</fullName>
    </alternativeName>
</protein>
<proteinExistence type="inferred from homology"/>
<dbReference type="EC" id="4.6.1.17" evidence="1"/>
<dbReference type="EMBL" id="CP000038">
    <property type="protein sequence ID" value="AAZ87511.1"/>
    <property type="molecule type" value="Genomic_DNA"/>
</dbReference>
<dbReference type="RefSeq" id="WP_000080891.1">
    <property type="nucleotide sequence ID" value="NC_007384.1"/>
</dbReference>
<dbReference type="SMR" id="Q3Z401"/>
<dbReference type="GeneID" id="93776647"/>
<dbReference type="KEGG" id="ssn:SSON_0762"/>
<dbReference type="HOGENOM" id="CLU_074693_1_1_6"/>
<dbReference type="UniPathway" id="UPA00344"/>
<dbReference type="Proteomes" id="UP000002529">
    <property type="component" value="Chromosome"/>
</dbReference>
<dbReference type="GO" id="GO:0061799">
    <property type="term" value="F:cyclic pyranopterin monophosphate synthase activity"/>
    <property type="evidence" value="ECO:0007669"/>
    <property type="project" value="UniProtKB-UniRule"/>
</dbReference>
<dbReference type="GO" id="GO:0006777">
    <property type="term" value="P:Mo-molybdopterin cofactor biosynthetic process"/>
    <property type="evidence" value="ECO:0007669"/>
    <property type="project" value="UniProtKB-UniRule"/>
</dbReference>
<dbReference type="CDD" id="cd01420">
    <property type="entry name" value="MoaC_PE"/>
    <property type="match status" value="1"/>
</dbReference>
<dbReference type="FunFam" id="3.30.70.640:FF:000001">
    <property type="entry name" value="Cyclic pyranopterin monophosphate synthase"/>
    <property type="match status" value="1"/>
</dbReference>
<dbReference type="Gene3D" id="3.30.70.640">
    <property type="entry name" value="Molybdopterin cofactor biosynthesis C (MoaC) domain"/>
    <property type="match status" value="1"/>
</dbReference>
<dbReference type="HAMAP" id="MF_01224_B">
    <property type="entry name" value="MoaC_B"/>
    <property type="match status" value="1"/>
</dbReference>
<dbReference type="InterPro" id="IPR023045">
    <property type="entry name" value="MoaC"/>
</dbReference>
<dbReference type="InterPro" id="IPR047594">
    <property type="entry name" value="MoaC_bact/euk"/>
</dbReference>
<dbReference type="InterPro" id="IPR036522">
    <property type="entry name" value="MoaC_sf"/>
</dbReference>
<dbReference type="InterPro" id="IPR050105">
    <property type="entry name" value="MoCo_biosynth_MoaA/MoaC"/>
</dbReference>
<dbReference type="InterPro" id="IPR002820">
    <property type="entry name" value="Mopterin_CF_biosynth-C_dom"/>
</dbReference>
<dbReference type="NCBIfam" id="TIGR00581">
    <property type="entry name" value="moaC"/>
    <property type="match status" value="1"/>
</dbReference>
<dbReference type="NCBIfam" id="NF006870">
    <property type="entry name" value="PRK09364.1"/>
    <property type="match status" value="1"/>
</dbReference>
<dbReference type="PANTHER" id="PTHR22960">
    <property type="entry name" value="MOLYBDOPTERIN COFACTOR SYNTHESIS PROTEIN A"/>
    <property type="match status" value="1"/>
</dbReference>
<dbReference type="Pfam" id="PF01967">
    <property type="entry name" value="MoaC"/>
    <property type="match status" value="1"/>
</dbReference>
<dbReference type="SUPFAM" id="SSF55040">
    <property type="entry name" value="Molybdenum cofactor biosynthesis protein C, MoaC"/>
    <property type="match status" value="1"/>
</dbReference>
<comment type="function">
    <text evidence="1">Catalyzes the conversion of (8S)-3',8-cyclo-7,8-dihydroguanosine 5'-triphosphate to cyclic pyranopterin monophosphate (cPMP).</text>
</comment>
<comment type="catalytic activity">
    <reaction evidence="1">
        <text>(8S)-3',8-cyclo-7,8-dihydroguanosine 5'-triphosphate = cyclic pyranopterin phosphate + diphosphate</text>
        <dbReference type="Rhea" id="RHEA:49580"/>
        <dbReference type="ChEBI" id="CHEBI:33019"/>
        <dbReference type="ChEBI" id="CHEBI:59648"/>
        <dbReference type="ChEBI" id="CHEBI:131766"/>
        <dbReference type="EC" id="4.6.1.17"/>
    </reaction>
</comment>
<comment type="pathway">
    <text evidence="1">Cofactor biosynthesis; molybdopterin biosynthesis.</text>
</comment>
<comment type="subunit">
    <text evidence="1">Homohexamer; trimer of dimers.</text>
</comment>
<comment type="similarity">
    <text evidence="1">Belongs to the MoaC family.</text>
</comment>
<gene>
    <name evidence="1" type="primary">moaC</name>
    <name type="ordered locus">SSON_0762</name>
</gene>
<accession>Q3Z401</accession>
<evidence type="ECO:0000255" key="1">
    <source>
        <dbReference type="HAMAP-Rule" id="MF_01224"/>
    </source>
</evidence>
<name>MOAC_SHISS</name>